<gene>
    <name type="primary">efp</name>
    <name type="ordered locus">slr0434</name>
</gene>
<proteinExistence type="inferred from homology"/>
<feature type="chain" id="PRO_0000094354" description="Elongation factor P">
    <location>
        <begin position="1"/>
        <end position="187"/>
    </location>
</feature>
<comment type="function">
    <text evidence="1">Involved in peptide bond synthesis. Stimulates efficient translation and peptide-bond synthesis on native or reconstituted 70S ribosomes in vitro. Probably functions indirectly by altering the affinity of the ribosome for aminoacyl-tRNA, thus increasing their reactivity as acceptors for peptidyl transferase (By similarity).</text>
</comment>
<comment type="pathway">
    <text>Protein biosynthesis; polypeptide chain elongation.</text>
</comment>
<comment type="subcellular location">
    <subcellularLocation>
        <location evidence="1">Cytoplasm</location>
    </subcellularLocation>
</comment>
<comment type="similarity">
    <text evidence="2">Belongs to the elongation factor P family.</text>
</comment>
<dbReference type="EMBL" id="BA000022">
    <property type="protein sequence ID" value="BAA10251.1"/>
    <property type="molecule type" value="Genomic_DNA"/>
</dbReference>
<dbReference type="PIR" id="S74333">
    <property type="entry name" value="S74333"/>
</dbReference>
<dbReference type="SMR" id="Q55119"/>
<dbReference type="FunCoup" id="Q55119">
    <property type="interactions" value="480"/>
</dbReference>
<dbReference type="IntAct" id="Q55119">
    <property type="interactions" value="1"/>
</dbReference>
<dbReference type="STRING" id="1148.gene:10499750"/>
<dbReference type="PaxDb" id="1148-1001112"/>
<dbReference type="EnsemblBacteria" id="BAA10251">
    <property type="protein sequence ID" value="BAA10251"/>
    <property type="gene ID" value="BAA10251"/>
</dbReference>
<dbReference type="KEGG" id="syn:slr0434"/>
<dbReference type="eggNOG" id="COG0231">
    <property type="taxonomic scope" value="Bacteria"/>
</dbReference>
<dbReference type="InParanoid" id="Q55119"/>
<dbReference type="PhylomeDB" id="Q55119"/>
<dbReference type="UniPathway" id="UPA00345"/>
<dbReference type="Proteomes" id="UP000001425">
    <property type="component" value="Chromosome"/>
</dbReference>
<dbReference type="GO" id="GO:0005737">
    <property type="term" value="C:cytoplasm"/>
    <property type="evidence" value="ECO:0000318"/>
    <property type="project" value="GO_Central"/>
</dbReference>
<dbReference type="GO" id="GO:0003746">
    <property type="term" value="F:translation elongation factor activity"/>
    <property type="evidence" value="ECO:0000318"/>
    <property type="project" value="GO_Central"/>
</dbReference>
<dbReference type="GO" id="GO:0043043">
    <property type="term" value="P:peptide biosynthetic process"/>
    <property type="evidence" value="ECO:0007669"/>
    <property type="project" value="InterPro"/>
</dbReference>
<dbReference type="CDD" id="cd04470">
    <property type="entry name" value="S1_EF-P_repeat_1"/>
    <property type="match status" value="1"/>
</dbReference>
<dbReference type="CDD" id="cd05794">
    <property type="entry name" value="S1_EF-P_repeat_2"/>
    <property type="match status" value="1"/>
</dbReference>
<dbReference type="FunFam" id="2.30.30.30:FF:000003">
    <property type="entry name" value="Elongation factor P"/>
    <property type="match status" value="1"/>
</dbReference>
<dbReference type="FunFam" id="2.40.50.140:FF:000004">
    <property type="entry name" value="Elongation factor P"/>
    <property type="match status" value="1"/>
</dbReference>
<dbReference type="FunFam" id="2.40.50.140:FF:000009">
    <property type="entry name" value="Elongation factor P"/>
    <property type="match status" value="1"/>
</dbReference>
<dbReference type="Gene3D" id="2.30.30.30">
    <property type="match status" value="1"/>
</dbReference>
<dbReference type="Gene3D" id="2.40.50.140">
    <property type="entry name" value="Nucleic acid-binding proteins"/>
    <property type="match status" value="2"/>
</dbReference>
<dbReference type="HAMAP" id="MF_00141">
    <property type="entry name" value="EF_P"/>
    <property type="match status" value="1"/>
</dbReference>
<dbReference type="InterPro" id="IPR015365">
    <property type="entry name" value="Elong-fact-P_C"/>
</dbReference>
<dbReference type="InterPro" id="IPR012340">
    <property type="entry name" value="NA-bd_OB-fold"/>
</dbReference>
<dbReference type="InterPro" id="IPR014722">
    <property type="entry name" value="Rib_uL2_dom2"/>
</dbReference>
<dbReference type="InterPro" id="IPR020599">
    <property type="entry name" value="Transl_elong_fac_P/YeiP"/>
</dbReference>
<dbReference type="InterPro" id="IPR013185">
    <property type="entry name" value="Transl_elong_KOW-like"/>
</dbReference>
<dbReference type="InterPro" id="IPR001059">
    <property type="entry name" value="Transl_elong_P/YeiP_cen"/>
</dbReference>
<dbReference type="InterPro" id="IPR013852">
    <property type="entry name" value="Transl_elong_P/YeiP_CS"/>
</dbReference>
<dbReference type="InterPro" id="IPR011768">
    <property type="entry name" value="Transl_elongation_fac_P"/>
</dbReference>
<dbReference type="InterPro" id="IPR008991">
    <property type="entry name" value="Translation_prot_SH3-like_sf"/>
</dbReference>
<dbReference type="NCBIfam" id="TIGR00038">
    <property type="entry name" value="efp"/>
    <property type="match status" value="1"/>
</dbReference>
<dbReference type="NCBIfam" id="NF001810">
    <property type="entry name" value="PRK00529.1"/>
    <property type="match status" value="1"/>
</dbReference>
<dbReference type="PANTHER" id="PTHR30053">
    <property type="entry name" value="ELONGATION FACTOR P"/>
    <property type="match status" value="1"/>
</dbReference>
<dbReference type="PANTHER" id="PTHR30053:SF12">
    <property type="entry name" value="ELONGATION FACTOR P (EF-P) FAMILY PROTEIN"/>
    <property type="match status" value="1"/>
</dbReference>
<dbReference type="Pfam" id="PF01132">
    <property type="entry name" value="EFP"/>
    <property type="match status" value="1"/>
</dbReference>
<dbReference type="Pfam" id="PF08207">
    <property type="entry name" value="EFP_N"/>
    <property type="match status" value="1"/>
</dbReference>
<dbReference type="Pfam" id="PF09285">
    <property type="entry name" value="Elong-fact-P_C"/>
    <property type="match status" value="1"/>
</dbReference>
<dbReference type="PIRSF" id="PIRSF005901">
    <property type="entry name" value="EF-P"/>
    <property type="match status" value="1"/>
</dbReference>
<dbReference type="SMART" id="SM01185">
    <property type="entry name" value="EFP"/>
    <property type="match status" value="1"/>
</dbReference>
<dbReference type="SMART" id="SM00841">
    <property type="entry name" value="Elong-fact-P_C"/>
    <property type="match status" value="1"/>
</dbReference>
<dbReference type="SUPFAM" id="SSF50249">
    <property type="entry name" value="Nucleic acid-binding proteins"/>
    <property type="match status" value="2"/>
</dbReference>
<dbReference type="SUPFAM" id="SSF50104">
    <property type="entry name" value="Translation proteins SH3-like domain"/>
    <property type="match status" value="1"/>
</dbReference>
<dbReference type="PROSITE" id="PS01275">
    <property type="entry name" value="EFP"/>
    <property type="match status" value="1"/>
</dbReference>
<keyword id="KW-0963">Cytoplasm</keyword>
<keyword id="KW-0251">Elongation factor</keyword>
<keyword id="KW-0648">Protein biosynthesis</keyword>
<keyword id="KW-1185">Reference proteome</keyword>
<protein>
    <recommendedName>
        <fullName>Elongation factor P</fullName>
        <shortName>EF-P</shortName>
    </recommendedName>
</protein>
<sequence>MISSNDFRTGTSIVMDGAVWKVVEFLHVKPGKGSAFVRTKLKSVQTGNVVEKTFRAGETVPQANIEKSVMQHTYKDGDQYVFMDMETFEEVSIAPDTLGDKAKFIKEEMEVSVVTWDGTILDVELPTSVVLEIVETDPGVKGDTATGGTKPAILETGAQVMVPLFIAQGERIKVDTRDGSYLGRDNA</sequence>
<organism>
    <name type="scientific">Synechocystis sp. (strain ATCC 27184 / PCC 6803 / Kazusa)</name>
    <dbReference type="NCBI Taxonomy" id="1111708"/>
    <lineage>
        <taxon>Bacteria</taxon>
        <taxon>Bacillati</taxon>
        <taxon>Cyanobacteriota</taxon>
        <taxon>Cyanophyceae</taxon>
        <taxon>Synechococcales</taxon>
        <taxon>Merismopediaceae</taxon>
        <taxon>Synechocystis</taxon>
    </lineage>
</organism>
<name>EFP_SYNY3</name>
<evidence type="ECO:0000250" key="1"/>
<evidence type="ECO:0000305" key="2"/>
<reference key="1">
    <citation type="journal article" date="1995" name="DNA Res.">
        <title>Sequence analysis of the genome of the unicellular cyanobacterium Synechocystis sp. strain PCC6803. I. Sequence features in the 1 Mb region from map positions 64% to 92% of the genome.</title>
        <authorList>
            <person name="Kaneko T."/>
            <person name="Tanaka A."/>
            <person name="Sato S."/>
            <person name="Kotani H."/>
            <person name="Sazuka T."/>
            <person name="Miyajima N."/>
            <person name="Sugiura M."/>
            <person name="Tabata S."/>
        </authorList>
    </citation>
    <scope>NUCLEOTIDE SEQUENCE [LARGE SCALE GENOMIC DNA]</scope>
    <source>
        <strain>ATCC 27184 / PCC 6803 / N-1</strain>
    </source>
</reference>
<reference key="2">
    <citation type="journal article" date="1996" name="DNA Res.">
        <title>Sequence analysis of the genome of the unicellular cyanobacterium Synechocystis sp. strain PCC6803. II. Sequence determination of the entire genome and assignment of potential protein-coding regions.</title>
        <authorList>
            <person name="Kaneko T."/>
            <person name="Sato S."/>
            <person name="Kotani H."/>
            <person name="Tanaka A."/>
            <person name="Asamizu E."/>
            <person name="Nakamura Y."/>
            <person name="Miyajima N."/>
            <person name="Hirosawa M."/>
            <person name="Sugiura M."/>
            <person name="Sasamoto S."/>
            <person name="Kimura T."/>
            <person name="Hosouchi T."/>
            <person name="Matsuno A."/>
            <person name="Muraki A."/>
            <person name="Nakazaki N."/>
            <person name="Naruo K."/>
            <person name="Okumura S."/>
            <person name="Shimpo S."/>
            <person name="Takeuchi C."/>
            <person name="Wada T."/>
            <person name="Watanabe A."/>
            <person name="Yamada M."/>
            <person name="Yasuda M."/>
            <person name="Tabata S."/>
        </authorList>
    </citation>
    <scope>NUCLEOTIDE SEQUENCE [LARGE SCALE GENOMIC DNA]</scope>
    <source>
        <strain>ATCC 27184 / PCC 6803 / Kazusa</strain>
    </source>
</reference>
<accession>Q55119</accession>